<protein>
    <recommendedName>
        <fullName>Uncharacterized protein YDR102C</fullName>
    </recommendedName>
</protein>
<feature type="chain" id="PRO_0000299873" description="Uncharacterized protein YDR102C">
    <location>
        <begin position="1"/>
        <end position="110"/>
    </location>
</feature>
<sequence length="110" mass="12700">MTLLLQKCIRVELRKDPIFNASSSLEIFLSVLESVIYPFKGNLILLDFHLVDVQTTCYQRNSSMRNQLMSVFCQSLREFTLTALSCNSYCIIIVATRWQKIDNALKMTGR</sequence>
<dbReference type="EMBL" id="Z47746">
    <property type="protein sequence ID" value="CAA87678.1"/>
    <property type="molecule type" value="Genomic_DNA"/>
</dbReference>
<dbReference type="EMBL" id="BK006938">
    <property type="protein sequence ID" value="DAA80276.1"/>
    <property type="molecule type" value="Genomic_DNA"/>
</dbReference>
<dbReference type="PIR" id="S51253">
    <property type="entry name" value="S51253"/>
</dbReference>
<dbReference type="RefSeq" id="NP_001335756.1">
    <property type="nucleotide sequence ID" value="NM_001348810.1"/>
</dbReference>
<dbReference type="DIP" id="DIP-3877N"/>
<dbReference type="FunCoup" id="Q03864">
    <property type="interactions" value="36"/>
</dbReference>
<dbReference type="IntAct" id="Q03864">
    <property type="interactions" value="2"/>
</dbReference>
<dbReference type="STRING" id="4932.YDR102C"/>
<dbReference type="PaxDb" id="4932-YDR102C"/>
<dbReference type="EnsemblFungi" id="YDR102C_mRNA">
    <property type="protein sequence ID" value="YDR102C"/>
    <property type="gene ID" value="YDR102C"/>
</dbReference>
<dbReference type="GeneID" id="851679"/>
<dbReference type="AGR" id="SGD:S000002509"/>
<dbReference type="SGD" id="S000002509">
    <property type="gene designation" value="YDR102C"/>
</dbReference>
<dbReference type="HOGENOM" id="CLU_2173010_0_0_1"/>
<dbReference type="InParanoid" id="Q03864"/>
<dbReference type="PRO" id="PR:Q03864"/>
<dbReference type="Proteomes" id="UP000002311">
    <property type="component" value="Chromosome IV"/>
</dbReference>
<dbReference type="RNAct" id="Q03864">
    <property type="molecule type" value="protein"/>
</dbReference>
<organism>
    <name type="scientific">Saccharomyces cerevisiae (strain ATCC 204508 / S288c)</name>
    <name type="common">Baker's yeast</name>
    <dbReference type="NCBI Taxonomy" id="559292"/>
    <lineage>
        <taxon>Eukaryota</taxon>
        <taxon>Fungi</taxon>
        <taxon>Dikarya</taxon>
        <taxon>Ascomycota</taxon>
        <taxon>Saccharomycotina</taxon>
        <taxon>Saccharomycetes</taxon>
        <taxon>Saccharomycetales</taxon>
        <taxon>Saccharomycetaceae</taxon>
        <taxon>Saccharomyces</taxon>
    </lineage>
</organism>
<name>YD102_YEAST</name>
<proteinExistence type="predicted"/>
<accession>Q03864</accession>
<accession>A0A1S0T057</accession>
<gene>
    <name type="ordered locus">YDR102C</name>
</gene>
<reference key="1">
    <citation type="journal article" date="1997" name="Nature">
        <title>The nucleotide sequence of Saccharomyces cerevisiae chromosome IV.</title>
        <authorList>
            <person name="Jacq C."/>
            <person name="Alt-Moerbe J."/>
            <person name="Andre B."/>
            <person name="Arnold W."/>
            <person name="Bahr A."/>
            <person name="Ballesta J.P.G."/>
            <person name="Bargues M."/>
            <person name="Baron L."/>
            <person name="Becker A."/>
            <person name="Biteau N."/>
            <person name="Bloecker H."/>
            <person name="Blugeon C."/>
            <person name="Boskovic J."/>
            <person name="Brandt P."/>
            <person name="Brueckner M."/>
            <person name="Buitrago M.J."/>
            <person name="Coster F."/>
            <person name="Delaveau T."/>
            <person name="del Rey F."/>
            <person name="Dujon B."/>
            <person name="Eide L.G."/>
            <person name="Garcia-Cantalejo J.M."/>
            <person name="Goffeau A."/>
            <person name="Gomez-Peris A."/>
            <person name="Granotier C."/>
            <person name="Hanemann V."/>
            <person name="Hankeln T."/>
            <person name="Hoheisel J.D."/>
            <person name="Jaeger W."/>
            <person name="Jimenez A."/>
            <person name="Jonniaux J.-L."/>
            <person name="Kraemer C."/>
            <person name="Kuester H."/>
            <person name="Laamanen P."/>
            <person name="Legros Y."/>
            <person name="Louis E.J."/>
            <person name="Moeller-Rieker S."/>
            <person name="Monnet A."/>
            <person name="Moro M."/>
            <person name="Mueller-Auer S."/>
            <person name="Nussbaumer B."/>
            <person name="Paricio N."/>
            <person name="Paulin L."/>
            <person name="Perea J."/>
            <person name="Perez-Alonso M."/>
            <person name="Perez-Ortin J.E."/>
            <person name="Pohl T.M."/>
            <person name="Prydz H."/>
            <person name="Purnelle B."/>
            <person name="Rasmussen S.W."/>
            <person name="Remacha M.A."/>
            <person name="Revuelta J.L."/>
            <person name="Rieger M."/>
            <person name="Salom D."/>
            <person name="Saluz H.P."/>
            <person name="Saiz J.E."/>
            <person name="Saren A.-M."/>
            <person name="Schaefer M."/>
            <person name="Scharfe M."/>
            <person name="Schmidt E.R."/>
            <person name="Schneider C."/>
            <person name="Scholler P."/>
            <person name="Schwarz S."/>
            <person name="Soler-Mira A."/>
            <person name="Urrestarazu L.A."/>
            <person name="Verhasselt P."/>
            <person name="Vissers S."/>
            <person name="Voet M."/>
            <person name="Volckaert G."/>
            <person name="Wagner G."/>
            <person name="Wambutt R."/>
            <person name="Wedler E."/>
            <person name="Wedler H."/>
            <person name="Woelfl S."/>
            <person name="Harris D.E."/>
            <person name="Bowman S."/>
            <person name="Brown D."/>
            <person name="Churcher C.M."/>
            <person name="Connor R."/>
            <person name="Dedman K."/>
            <person name="Gentles S."/>
            <person name="Hamlin N."/>
            <person name="Hunt S."/>
            <person name="Jones L."/>
            <person name="McDonald S."/>
            <person name="Murphy L.D."/>
            <person name="Niblett D."/>
            <person name="Odell C."/>
            <person name="Oliver K."/>
            <person name="Rajandream M.A."/>
            <person name="Richards C."/>
            <person name="Shore L."/>
            <person name="Walsh S.V."/>
            <person name="Barrell B.G."/>
            <person name="Dietrich F.S."/>
            <person name="Mulligan J.T."/>
            <person name="Allen E."/>
            <person name="Araujo R."/>
            <person name="Aviles E."/>
            <person name="Berno A."/>
            <person name="Carpenter J."/>
            <person name="Chen E."/>
            <person name="Cherry J.M."/>
            <person name="Chung E."/>
            <person name="Duncan M."/>
            <person name="Hunicke-Smith S."/>
            <person name="Hyman R.W."/>
            <person name="Komp C."/>
            <person name="Lashkari D."/>
            <person name="Lew H."/>
            <person name="Lin D."/>
            <person name="Mosedale D."/>
            <person name="Nakahara K."/>
            <person name="Namath A."/>
            <person name="Oefner P."/>
            <person name="Oh C."/>
            <person name="Petel F.X."/>
            <person name="Roberts D."/>
            <person name="Schramm S."/>
            <person name="Schroeder M."/>
            <person name="Shogren T."/>
            <person name="Shroff N."/>
            <person name="Winant A."/>
            <person name="Yelton M.A."/>
            <person name="Botstein D."/>
            <person name="Davis R.W."/>
            <person name="Johnston M."/>
            <person name="Andrews S."/>
            <person name="Brinkman R."/>
            <person name="Cooper J."/>
            <person name="Ding H."/>
            <person name="Du Z."/>
            <person name="Favello A."/>
            <person name="Fulton L."/>
            <person name="Gattung S."/>
            <person name="Greco T."/>
            <person name="Hallsworth K."/>
            <person name="Hawkins J."/>
            <person name="Hillier L.W."/>
            <person name="Jier M."/>
            <person name="Johnson D."/>
            <person name="Johnston L."/>
            <person name="Kirsten J."/>
            <person name="Kucaba T."/>
            <person name="Langston Y."/>
            <person name="Latreille P."/>
            <person name="Le T."/>
            <person name="Mardis E."/>
            <person name="Menezes S."/>
            <person name="Miller N."/>
            <person name="Nhan M."/>
            <person name="Pauley A."/>
            <person name="Peluso D."/>
            <person name="Rifkin L."/>
            <person name="Riles L."/>
            <person name="Taich A."/>
            <person name="Trevaskis E."/>
            <person name="Vignati D."/>
            <person name="Wilcox L."/>
            <person name="Wohldman P."/>
            <person name="Vaudin M."/>
            <person name="Wilson R."/>
            <person name="Waterston R."/>
            <person name="Albermann K."/>
            <person name="Hani J."/>
            <person name="Heumann K."/>
            <person name="Kleine K."/>
            <person name="Mewes H.-W."/>
            <person name="Zollner A."/>
            <person name="Zaccaria P."/>
        </authorList>
    </citation>
    <scope>NUCLEOTIDE SEQUENCE [LARGE SCALE GENOMIC DNA]</scope>
    <source>
        <strain>ATCC 204508 / S288c</strain>
    </source>
</reference>
<reference key="2">
    <citation type="journal article" date="2014" name="G3 (Bethesda)">
        <title>The reference genome sequence of Saccharomyces cerevisiae: Then and now.</title>
        <authorList>
            <person name="Engel S.R."/>
            <person name="Dietrich F.S."/>
            <person name="Fisk D.G."/>
            <person name="Binkley G."/>
            <person name="Balakrishnan R."/>
            <person name="Costanzo M.C."/>
            <person name="Dwight S.S."/>
            <person name="Hitz B.C."/>
            <person name="Karra K."/>
            <person name="Nash R.S."/>
            <person name="Weng S."/>
            <person name="Wong E.D."/>
            <person name="Lloyd P."/>
            <person name="Skrzypek M.S."/>
            <person name="Miyasato S.R."/>
            <person name="Simison M."/>
            <person name="Cherry J.M."/>
        </authorList>
    </citation>
    <scope>GENOME REANNOTATION</scope>
    <source>
        <strain>ATCC 204508 / S288c</strain>
    </source>
</reference>
<keyword id="KW-1185">Reference proteome</keyword>